<comment type="function">
    <text evidence="1">Assembles around the rod to form the L-ring and probably protects the motor/basal body from shearing forces during rotation.</text>
</comment>
<comment type="subunit">
    <text evidence="1">The basal body constitutes a major portion of the flagellar organelle and consists of four rings (L,P,S, and M) mounted on a central rod.</text>
</comment>
<comment type="subcellular location">
    <subcellularLocation>
        <location evidence="1">Cell outer membrane</location>
        <topology evidence="1">Lipid-anchor</topology>
    </subcellularLocation>
    <subcellularLocation>
        <location evidence="1">Bacterial flagellum basal body</location>
    </subcellularLocation>
</comment>
<comment type="similarity">
    <text evidence="1">Belongs to the FlgH family.</text>
</comment>
<comment type="caution">
    <text evidence="2">Brucella species display species-specific inactivation of flagellar genes and are consequently nonmotile.</text>
</comment>
<comment type="sequence caution" evidence="2">
    <conflict type="erroneous initiation">
        <sequence resource="EMBL-CDS" id="AAL54324"/>
    </conflict>
</comment>
<reference key="1">
    <citation type="journal article" date="2002" name="Proc. Natl. Acad. Sci. U.S.A.">
        <title>The genome sequence of the facultative intracellular pathogen Brucella melitensis.</title>
        <authorList>
            <person name="DelVecchio V.G."/>
            <person name="Kapatral V."/>
            <person name="Redkar R.J."/>
            <person name="Patra G."/>
            <person name="Mujer C."/>
            <person name="Los T."/>
            <person name="Ivanova N."/>
            <person name="Anderson I."/>
            <person name="Bhattacharyya A."/>
            <person name="Lykidis A."/>
            <person name="Reznik G."/>
            <person name="Jablonski L."/>
            <person name="Larsen N."/>
            <person name="D'Souza M."/>
            <person name="Bernal A."/>
            <person name="Mazur M."/>
            <person name="Goltsman E."/>
            <person name="Selkov E."/>
            <person name="Elzer P.H."/>
            <person name="Hagius S."/>
            <person name="O'Callaghan D."/>
            <person name="Letesson J.-J."/>
            <person name="Haselkorn R."/>
            <person name="Kyrpides N.C."/>
            <person name="Overbeek R."/>
        </authorList>
    </citation>
    <scope>NUCLEOTIDE SEQUENCE [LARGE SCALE GENOMIC DNA]</scope>
    <source>
        <strain>ATCC 23456 / CCUG 17765 / NCTC 10094 / 16M</strain>
    </source>
</reference>
<name>FLGH_BRUME</name>
<organism>
    <name type="scientific">Brucella melitensis biotype 1 (strain ATCC 23456 / CCUG 17765 / NCTC 10094 / 16M)</name>
    <dbReference type="NCBI Taxonomy" id="224914"/>
    <lineage>
        <taxon>Bacteria</taxon>
        <taxon>Pseudomonadati</taxon>
        <taxon>Pseudomonadota</taxon>
        <taxon>Alphaproteobacteria</taxon>
        <taxon>Hyphomicrobiales</taxon>
        <taxon>Brucellaceae</taxon>
        <taxon>Brucella/Ochrobactrum group</taxon>
        <taxon>Brucella</taxon>
    </lineage>
</organism>
<gene>
    <name evidence="1" type="primary">flgH</name>
    <name type="ordered locus">BMEII1082</name>
</gene>
<sequence>MNKAILAVAMVLLLAGCATKPEEIGRAPDLSPVAAHLGMQNNPQFNGYPARPGKASYSLWDQRSSNFFKDPRAATPGDVLTVIISINDRANLDNKTDRERVSKGIYGGGGSFATSSITGAAAGGDMDASVNTHSDSKSKGKGTIERSEDIRLQIAAIVTDTLPNGNLIIRGSQEVRVNNELRVLNVAGVVRPRDISGNNTISYDKIAEARISYGGRGRLSEIQQPPYGQQILDQFSPF</sequence>
<feature type="signal peptide" evidence="1">
    <location>
        <begin position="1"/>
        <end position="16"/>
    </location>
</feature>
<feature type="chain" id="PRO_0000009429" description="Flagellar L-ring protein">
    <location>
        <begin position="17"/>
        <end position="238"/>
    </location>
</feature>
<feature type="lipid moiety-binding region" description="N-palmitoyl cysteine" evidence="1">
    <location>
        <position position="17"/>
    </location>
</feature>
<feature type="lipid moiety-binding region" description="S-diacylglycerol cysteine" evidence="1">
    <location>
        <position position="17"/>
    </location>
</feature>
<proteinExistence type="inferred from homology"/>
<evidence type="ECO:0000255" key="1">
    <source>
        <dbReference type="HAMAP-Rule" id="MF_00415"/>
    </source>
</evidence>
<evidence type="ECO:0000305" key="2"/>
<keyword id="KW-0975">Bacterial flagellum</keyword>
<keyword id="KW-0998">Cell outer membrane</keyword>
<keyword id="KW-0449">Lipoprotein</keyword>
<keyword id="KW-0472">Membrane</keyword>
<keyword id="KW-0564">Palmitate</keyword>
<keyword id="KW-0732">Signal</keyword>
<protein>
    <recommendedName>
        <fullName evidence="1">Flagellar L-ring protein</fullName>
    </recommendedName>
    <alternativeName>
        <fullName evidence="1">Basal body L-ring protein</fullName>
    </alternativeName>
</protein>
<dbReference type="EMBL" id="AE008918">
    <property type="protein sequence ID" value="AAL54324.1"/>
    <property type="status" value="ALT_INIT"/>
    <property type="molecule type" value="Genomic_DNA"/>
</dbReference>
<dbReference type="PIR" id="AI3644">
    <property type="entry name" value="AI3644"/>
</dbReference>
<dbReference type="SMR" id="Q8YB19"/>
<dbReference type="KEGG" id="bme:BMEII1082"/>
<dbReference type="eggNOG" id="COG2063">
    <property type="taxonomic scope" value="Bacteria"/>
</dbReference>
<dbReference type="Proteomes" id="UP000000419">
    <property type="component" value="Chromosome II"/>
</dbReference>
<dbReference type="GO" id="GO:0009427">
    <property type="term" value="C:bacterial-type flagellum basal body, distal rod, L ring"/>
    <property type="evidence" value="ECO:0007669"/>
    <property type="project" value="InterPro"/>
</dbReference>
<dbReference type="GO" id="GO:0009279">
    <property type="term" value="C:cell outer membrane"/>
    <property type="evidence" value="ECO:0007669"/>
    <property type="project" value="UniProtKB-SubCell"/>
</dbReference>
<dbReference type="GO" id="GO:0003774">
    <property type="term" value="F:cytoskeletal motor activity"/>
    <property type="evidence" value="ECO:0007669"/>
    <property type="project" value="InterPro"/>
</dbReference>
<dbReference type="GO" id="GO:0071973">
    <property type="term" value="P:bacterial-type flagellum-dependent cell motility"/>
    <property type="evidence" value="ECO:0007669"/>
    <property type="project" value="InterPro"/>
</dbReference>
<dbReference type="HAMAP" id="MF_00415">
    <property type="entry name" value="FlgH"/>
    <property type="match status" value="1"/>
</dbReference>
<dbReference type="InterPro" id="IPR000527">
    <property type="entry name" value="Flag_Lring"/>
</dbReference>
<dbReference type="NCBIfam" id="NF001305">
    <property type="entry name" value="PRK00249.1-5"/>
    <property type="match status" value="1"/>
</dbReference>
<dbReference type="PANTHER" id="PTHR34933">
    <property type="entry name" value="FLAGELLAR L-RING PROTEIN"/>
    <property type="match status" value="1"/>
</dbReference>
<dbReference type="PANTHER" id="PTHR34933:SF1">
    <property type="entry name" value="FLAGELLAR L-RING PROTEIN"/>
    <property type="match status" value="1"/>
</dbReference>
<dbReference type="Pfam" id="PF02107">
    <property type="entry name" value="FlgH"/>
    <property type="match status" value="1"/>
</dbReference>
<dbReference type="PRINTS" id="PR01008">
    <property type="entry name" value="FLGLRINGFLGH"/>
</dbReference>
<dbReference type="PROSITE" id="PS51257">
    <property type="entry name" value="PROKAR_LIPOPROTEIN"/>
    <property type="match status" value="1"/>
</dbReference>
<accession>Q8YB19</accession>